<keyword id="KW-0238">DNA-binding</keyword>
<keyword id="KW-0479">Metal-binding</keyword>
<keyword id="KW-0539">Nucleus</keyword>
<keyword id="KW-1185">Reference proteome</keyword>
<keyword id="KW-0677">Repeat</keyword>
<keyword id="KW-0804">Transcription</keyword>
<keyword id="KW-0805">Transcription regulation</keyword>
<keyword id="KW-0862">Zinc</keyword>
<keyword id="KW-0863">Zinc-finger</keyword>
<accession>Q6ZT77</accession>
<organism>
    <name type="scientific">Homo sapiens</name>
    <name type="common">Human</name>
    <dbReference type="NCBI Taxonomy" id="9606"/>
    <lineage>
        <taxon>Eukaryota</taxon>
        <taxon>Metazoa</taxon>
        <taxon>Chordata</taxon>
        <taxon>Craniata</taxon>
        <taxon>Vertebrata</taxon>
        <taxon>Euteleostomi</taxon>
        <taxon>Mammalia</taxon>
        <taxon>Eutheria</taxon>
        <taxon>Euarchontoglires</taxon>
        <taxon>Primates</taxon>
        <taxon>Haplorrhini</taxon>
        <taxon>Catarrhini</taxon>
        <taxon>Hominidae</taxon>
        <taxon>Homo</taxon>
    </lineage>
</organism>
<reference key="1">
    <citation type="journal article" date="2004" name="Nat. Genet.">
        <title>Complete sequencing and characterization of 21,243 full-length human cDNAs.</title>
        <authorList>
            <person name="Ota T."/>
            <person name="Suzuki Y."/>
            <person name="Nishikawa T."/>
            <person name="Otsuki T."/>
            <person name="Sugiyama T."/>
            <person name="Irie R."/>
            <person name="Wakamatsu A."/>
            <person name="Hayashi K."/>
            <person name="Sato H."/>
            <person name="Nagai K."/>
            <person name="Kimura K."/>
            <person name="Makita H."/>
            <person name="Sekine M."/>
            <person name="Obayashi M."/>
            <person name="Nishi T."/>
            <person name="Shibahara T."/>
            <person name="Tanaka T."/>
            <person name="Ishii S."/>
            <person name="Yamamoto J."/>
            <person name="Saito K."/>
            <person name="Kawai Y."/>
            <person name="Isono Y."/>
            <person name="Nakamura Y."/>
            <person name="Nagahari K."/>
            <person name="Murakami K."/>
            <person name="Yasuda T."/>
            <person name="Iwayanagi T."/>
            <person name="Wagatsuma M."/>
            <person name="Shiratori A."/>
            <person name="Sudo H."/>
            <person name="Hosoiri T."/>
            <person name="Kaku Y."/>
            <person name="Kodaira H."/>
            <person name="Kondo H."/>
            <person name="Sugawara M."/>
            <person name="Takahashi M."/>
            <person name="Kanda K."/>
            <person name="Yokoi T."/>
            <person name="Furuya T."/>
            <person name="Kikkawa E."/>
            <person name="Omura Y."/>
            <person name="Abe K."/>
            <person name="Kamihara K."/>
            <person name="Katsuta N."/>
            <person name="Sato K."/>
            <person name="Tanikawa M."/>
            <person name="Yamazaki M."/>
            <person name="Ninomiya K."/>
            <person name="Ishibashi T."/>
            <person name="Yamashita H."/>
            <person name="Murakawa K."/>
            <person name="Fujimori K."/>
            <person name="Tanai H."/>
            <person name="Kimata M."/>
            <person name="Watanabe M."/>
            <person name="Hiraoka S."/>
            <person name="Chiba Y."/>
            <person name="Ishida S."/>
            <person name="Ono Y."/>
            <person name="Takiguchi S."/>
            <person name="Watanabe S."/>
            <person name="Yosida M."/>
            <person name="Hotuta T."/>
            <person name="Kusano J."/>
            <person name="Kanehori K."/>
            <person name="Takahashi-Fujii A."/>
            <person name="Hara H."/>
            <person name="Tanase T.-O."/>
            <person name="Nomura Y."/>
            <person name="Togiya S."/>
            <person name="Komai F."/>
            <person name="Hara R."/>
            <person name="Takeuchi K."/>
            <person name="Arita M."/>
            <person name="Imose N."/>
            <person name="Musashino K."/>
            <person name="Yuuki H."/>
            <person name="Oshima A."/>
            <person name="Sasaki N."/>
            <person name="Aotsuka S."/>
            <person name="Yoshikawa Y."/>
            <person name="Matsunawa H."/>
            <person name="Ichihara T."/>
            <person name="Shiohata N."/>
            <person name="Sano S."/>
            <person name="Moriya S."/>
            <person name="Momiyama H."/>
            <person name="Satoh N."/>
            <person name="Takami S."/>
            <person name="Terashima Y."/>
            <person name="Suzuki O."/>
            <person name="Nakagawa S."/>
            <person name="Senoh A."/>
            <person name="Mizoguchi H."/>
            <person name="Goto Y."/>
            <person name="Shimizu F."/>
            <person name="Wakebe H."/>
            <person name="Hishigaki H."/>
            <person name="Watanabe T."/>
            <person name="Sugiyama A."/>
            <person name="Takemoto M."/>
            <person name="Kawakami B."/>
            <person name="Yamazaki M."/>
            <person name="Watanabe K."/>
            <person name="Kumagai A."/>
            <person name="Itakura S."/>
            <person name="Fukuzumi Y."/>
            <person name="Fujimori Y."/>
            <person name="Komiyama M."/>
            <person name="Tashiro H."/>
            <person name="Tanigami A."/>
            <person name="Fujiwara T."/>
            <person name="Ono T."/>
            <person name="Yamada K."/>
            <person name="Fujii Y."/>
            <person name="Ozaki K."/>
            <person name="Hirao M."/>
            <person name="Ohmori Y."/>
            <person name="Kawabata A."/>
            <person name="Hikiji T."/>
            <person name="Kobatake N."/>
            <person name="Inagaki H."/>
            <person name="Ikema Y."/>
            <person name="Okamoto S."/>
            <person name="Okitani R."/>
            <person name="Kawakami T."/>
            <person name="Noguchi S."/>
            <person name="Itoh T."/>
            <person name="Shigeta K."/>
            <person name="Senba T."/>
            <person name="Matsumura K."/>
            <person name="Nakajima Y."/>
            <person name="Mizuno T."/>
            <person name="Morinaga M."/>
            <person name="Sasaki M."/>
            <person name="Togashi T."/>
            <person name="Oyama M."/>
            <person name="Hata H."/>
            <person name="Watanabe M."/>
            <person name="Komatsu T."/>
            <person name="Mizushima-Sugano J."/>
            <person name="Satoh T."/>
            <person name="Shirai Y."/>
            <person name="Takahashi Y."/>
            <person name="Nakagawa K."/>
            <person name="Okumura K."/>
            <person name="Nagase T."/>
            <person name="Nomura N."/>
            <person name="Kikuchi H."/>
            <person name="Masuho Y."/>
            <person name="Yamashita R."/>
            <person name="Nakai K."/>
            <person name="Yada T."/>
            <person name="Nakamura Y."/>
            <person name="Ohara O."/>
            <person name="Isogai T."/>
            <person name="Sugano S."/>
        </authorList>
    </citation>
    <scope>NUCLEOTIDE SEQUENCE [LARGE SCALE MRNA]</scope>
    <scope>VARIANT TYR-148</scope>
    <source>
        <tissue>Amygdala</tissue>
    </source>
</reference>
<reference key="2">
    <citation type="journal article" date="2004" name="Nature">
        <title>The DNA sequence and biology of human chromosome 19.</title>
        <authorList>
            <person name="Grimwood J."/>
            <person name="Gordon L.A."/>
            <person name="Olsen A.S."/>
            <person name="Terry A."/>
            <person name="Schmutz J."/>
            <person name="Lamerdin J.E."/>
            <person name="Hellsten U."/>
            <person name="Goodstein D."/>
            <person name="Couronne O."/>
            <person name="Tran-Gyamfi M."/>
            <person name="Aerts A."/>
            <person name="Altherr M."/>
            <person name="Ashworth L."/>
            <person name="Bajorek E."/>
            <person name="Black S."/>
            <person name="Branscomb E."/>
            <person name="Caenepeel S."/>
            <person name="Carrano A.V."/>
            <person name="Caoile C."/>
            <person name="Chan Y.M."/>
            <person name="Christensen M."/>
            <person name="Cleland C.A."/>
            <person name="Copeland A."/>
            <person name="Dalin E."/>
            <person name="Dehal P."/>
            <person name="Denys M."/>
            <person name="Detter J.C."/>
            <person name="Escobar J."/>
            <person name="Flowers D."/>
            <person name="Fotopulos D."/>
            <person name="Garcia C."/>
            <person name="Georgescu A.M."/>
            <person name="Glavina T."/>
            <person name="Gomez M."/>
            <person name="Gonzales E."/>
            <person name="Groza M."/>
            <person name="Hammon N."/>
            <person name="Hawkins T."/>
            <person name="Haydu L."/>
            <person name="Ho I."/>
            <person name="Huang W."/>
            <person name="Israni S."/>
            <person name="Jett J."/>
            <person name="Kadner K."/>
            <person name="Kimball H."/>
            <person name="Kobayashi A."/>
            <person name="Larionov V."/>
            <person name="Leem S.-H."/>
            <person name="Lopez F."/>
            <person name="Lou Y."/>
            <person name="Lowry S."/>
            <person name="Malfatti S."/>
            <person name="Martinez D."/>
            <person name="McCready P.M."/>
            <person name="Medina C."/>
            <person name="Morgan J."/>
            <person name="Nelson K."/>
            <person name="Nolan M."/>
            <person name="Ovcharenko I."/>
            <person name="Pitluck S."/>
            <person name="Pollard M."/>
            <person name="Popkie A.P."/>
            <person name="Predki P."/>
            <person name="Quan G."/>
            <person name="Ramirez L."/>
            <person name="Rash S."/>
            <person name="Retterer J."/>
            <person name="Rodriguez A."/>
            <person name="Rogers S."/>
            <person name="Salamov A."/>
            <person name="Salazar A."/>
            <person name="She X."/>
            <person name="Smith D."/>
            <person name="Slezak T."/>
            <person name="Solovyev V."/>
            <person name="Thayer N."/>
            <person name="Tice H."/>
            <person name="Tsai M."/>
            <person name="Ustaszewska A."/>
            <person name="Vo N."/>
            <person name="Wagner M."/>
            <person name="Wheeler J."/>
            <person name="Wu K."/>
            <person name="Xie G."/>
            <person name="Yang J."/>
            <person name="Dubchak I."/>
            <person name="Furey T.S."/>
            <person name="DeJong P."/>
            <person name="Dickson M."/>
            <person name="Gordon D."/>
            <person name="Eichler E.E."/>
            <person name="Pennacchio L.A."/>
            <person name="Richardson P."/>
            <person name="Stubbs L."/>
            <person name="Rokhsar D.S."/>
            <person name="Myers R.M."/>
            <person name="Rubin E.M."/>
            <person name="Lucas S.M."/>
        </authorList>
    </citation>
    <scope>NUCLEOTIDE SEQUENCE [LARGE SCALE GENOMIC DNA]</scope>
</reference>
<evidence type="ECO:0000255" key="1">
    <source>
        <dbReference type="PROSITE-ProRule" id="PRU00042"/>
    </source>
</evidence>
<evidence type="ECO:0000269" key="2">
    <source>
    </source>
</evidence>
<evidence type="ECO:0000305" key="3"/>
<sequence>MRRFILERNPTNVKNMAKLSPIPHTLLGIRKFMLERNHTSVINVAQPLFYPQPLVNMRRFILERNSTNVKNVAKPSTIFHTLLYIRQFILERNAINGIKTFTWSSSPHKHRRTHTGEKPYKCEECGKAFTASSTLSEYKTIHTGEKPCKCEECGKAFNWSSDFNKHKRIHSGQKPIL</sequence>
<gene>
    <name type="primary">ZNF826P</name>
    <name type="synonym">ZNF826</name>
</gene>
<feature type="chain" id="PRO_0000324818" description="Putative zinc finger protein 826">
    <location>
        <begin position="1"/>
        <end position="177"/>
    </location>
</feature>
<feature type="zinc finger region" description="C2H2-type 1; degenerate" evidence="1">
    <location>
        <begin position="99"/>
        <end position="114"/>
    </location>
</feature>
<feature type="zinc finger region" description="C2H2-type 2; degenerate" evidence="1">
    <location>
        <begin position="120"/>
        <end position="142"/>
    </location>
</feature>
<feature type="zinc finger region" description="C2H2-type 3" evidence="1">
    <location>
        <begin position="148"/>
        <end position="170"/>
    </location>
</feature>
<feature type="sequence variant" id="VAR_059940" description="In dbSNP:rs7247776." evidence="2">
    <original>C</original>
    <variation>Y</variation>
    <location>
        <position position="148"/>
    </location>
</feature>
<comment type="function">
    <text>May be involved in transcriptional regulation.</text>
</comment>
<comment type="subcellular location">
    <subcellularLocation>
        <location evidence="3">Nucleus</location>
    </subcellularLocation>
</comment>
<comment type="caution">
    <text evidence="3">Could be the product of a pseudogene.</text>
</comment>
<proteinExistence type="uncertain"/>
<protein>
    <recommendedName>
        <fullName>Putative zinc finger protein 826</fullName>
    </recommendedName>
</protein>
<name>ZN826_HUMAN</name>
<dbReference type="EMBL" id="AK126842">
    <property type="protein sequence ID" value="BAC86717.1"/>
    <property type="molecule type" value="mRNA"/>
</dbReference>
<dbReference type="EMBL" id="AC008554">
    <property type="status" value="NOT_ANNOTATED_CDS"/>
    <property type="molecule type" value="Genomic_DNA"/>
</dbReference>
<dbReference type="SMR" id="Q6ZT77"/>
<dbReference type="IntAct" id="Q6ZT77">
    <property type="interactions" value="1"/>
</dbReference>
<dbReference type="iPTMnet" id="Q6ZT77"/>
<dbReference type="PhosphoSitePlus" id="Q6ZT77"/>
<dbReference type="BioMuta" id="HGNC:33875"/>
<dbReference type="DMDM" id="172046184"/>
<dbReference type="jPOST" id="Q6ZT77"/>
<dbReference type="MassIVE" id="Q6ZT77"/>
<dbReference type="PeptideAtlas" id="Q6ZT77"/>
<dbReference type="AGR" id="HGNC:33875"/>
<dbReference type="GeneCards" id="ZNF826P"/>
<dbReference type="HGNC" id="HGNC:33875">
    <property type="gene designation" value="ZNF826P"/>
</dbReference>
<dbReference type="neXtProt" id="NX_Q6ZT77"/>
<dbReference type="PharmGKB" id="PA162410703"/>
<dbReference type="InParanoid" id="Q6ZT77"/>
<dbReference type="PAN-GO" id="Q6ZT77">
    <property type="GO annotations" value="3 GO annotations based on evolutionary models"/>
</dbReference>
<dbReference type="PhylomeDB" id="Q6ZT77"/>
<dbReference type="PathwayCommons" id="Q6ZT77"/>
<dbReference type="ChiTaRS" id="ZNF826P">
    <property type="organism name" value="human"/>
</dbReference>
<dbReference type="Pharos" id="Q6ZT77">
    <property type="development level" value="Tdark"/>
</dbReference>
<dbReference type="PRO" id="PR:Q6ZT77"/>
<dbReference type="Proteomes" id="UP000005640">
    <property type="component" value="Unplaced"/>
</dbReference>
<dbReference type="RNAct" id="Q6ZT77">
    <property type="molecule type" value="protein"/>
</dbReference>
<dbReference type="GO" id="GO:0005634">
    <property type="term" value="C:nucleus"/>
    <property type="evidence" value="ECO:0007669"/>
    <property type="project" value="UniProtKB-SubCell"/>
</dbReference>
<dbReference type="GO" id="GO:0003677">
    <property type="term" value="F:DNA binding"/>
    <property type="evidence" value="ECO:0007669"/>
    <property type="project" value="UniProtKB-KW"/>
</dbReference>
<dbReference type="GO" id="GO:0003700">
    <property type="term" value="F:DNA-binding transcription factor activity"/>
    <property type="evidence" value="ECO:0000303"/>
    <property type="project" value="ARUK-UCL"/>
</dbReference>
<dbReference type="GO" id="GO:0008270">
    <property type="term" value="F:zinc ion binding"/>
    <property type="evidence" value="ECO:0007669"/>
    <property type="project" value="UniProtKB-KW"/>
</dbReference>
<dbReference type="FunFam" id="3.30.160.60:FF:000034">
    <property type="entry name" value="zinc finger protein 25"/>
    <property type="match status" value="1"/>
</dbReference>
<dbReference type="FunFam" id="3.30.160.60:FF:002402">
    <property type="entry name" value="Zinc finger protein 347"/>
    <property type="match status" value="1"/>
</dbReference>
<dbReference type="FunFam" id="3.30.160.60:FF:000307">
    <property type="entry name" value="Zinc finger protein ZFP69 isoform 1"/>
    <property type="match status" value="1"/>
</dbReference>
<dbReference type="Gene3D" id="3.30.160.60">
    <property type="entry name" value="Classic Zinc Finger"/>
    <property type="match status" value="3"/>
</dbReference>
<dbReference type="InterPro" id="IPR039938">
    <property type="entry name" value="Sp4-like"/>
</dbReference>
<dbReference type="InterPro" id="IPR036236">
    <property type="entry name" value="Znf_C2H2_sf"/>
</dbReference>
<dbReference type="InterPro" id="IPR013087">
    <property type="entry name" value="Znf_C2H2_type"/>
</dbReference>
<dbReference type="PANTHER" id="PTHR14947">
    <property type="entry name" value="ZINC FINGER PROTEIN"/>
    <property type="match status" value="1"/>
</dbReference>
<dbReference type="PANTHER" id="PTHR14947:SF24">
    <property type="entry name" value="ZINC FINGER PROTEIN 781-RELATED"/>
    <property type="match status" value="1"/>
</dbReference>
<dbReference type="Pfam" id="PF00096">
    <property type="entry name" value="zf-C2H2"/>
    <property type="match status" value="1"/>
</dbReference>
<dbReference type="SMART" id="SM00355">
    <property type="entry name" value="ZnF_C2H2"/>
    <property type="match status" value="2"/>
</dbReference>
<dbReference type="SUPFAM" id="SSF57667">
    <property type="entry name" value="beta-beta-alpha zinc fingers"/>
    <property type="match status" value="2"/>
</dbReference>
<dbReference type="PROSITE" id="PS00028">
    <property type="entry name" value="ZINC_FINGER_C2H2_1"/>
    <property type="match status" value="1"/>
</dbReference>
<dbReference type="PROSITE" id="PS50157">
    <property type="entry name" value="ZINC_FINGER_C2H2_2"/>
    <property type="match status" value="3"/>
</dbReference>